<comment type="function">
    <text>May be involved in protein precursor import into chloroplasts. Not redundant with TIC20-I, TIC20-II or TIC20-IV.</text>
</comment>
<comment type="subunit">
    <text evidence="1">Part of the Tic complex.</text>
</comment>
<comment type="subcellular location">
    <subcellularLocation>
        <location evidence="3">Plastid</location>
        <location evidence="3">Chloroplast inner membrane</location>
        <topology evidence="3">Multi-pass membrane protein</topology>
    </subcellularLocation>
</comment>
<comment type="tissue specificity">
    <text evidence="3">Expressed in leaves, siliques and roots.</text>
</comment>
<comment type="developmental stage">
    <text evidence="3">Expressed throughout development.</text>
</comment>
<comment type="disruption phenotype">
    <text evidence="3">No visible phenotype.</text>
</comment>
<comment type="similarity">
    <text evidence="4">Belongs to the Tic20 family.</text>
</comment>
<name>TI205_ARATH</name>
<feature type="transit peptide" description="Chloroplast" evidence="2">
    <location>
        <begin position="1"/>
        <end position="49"/>
    </location>
</feature>
<feature type="chain" id="PRO_0000413666" description="Protein TIC 20-v, chloroplastic">
    <location>
        <begin position="50"/>
        <end position="209"/>
    </location>
</feature>
<feature type="transmembrane region" description="Helical" evidence="2">
    <location>
        <begin position="63"/>
        <end position="83"/>
    </location>
</feature>
<feature type="transmembrane region" description="Helical" evidence="2">
    <location>
        <begin position="103"/>
        <end position="123"/>
    </location>
</feature>
<feature type="transmembrane region" description="Helical" evidence="2">
    <location>
        <begin position="132"/>
        <end position="152"/>
    </location>
</feature>
<feature type="transmembrane region" description="Helical" evidence="2">
    <location>
        <begin position="173"/>
        <end position="193"/>
    </location>
</feature>
<feature type="sequence conflict" description="In Ref. 4; AAM64862." evidence="4" ref="4">
    <original>Q</original>
    <variation>H</variation>
    <location>
        <position position="88"/>
    </location>
</feature>
<organism>
    <name type="scientific">Arabidopsis thaliana</name>
    <name type="common">Mouse-ear cress</name>
    <dbReference type="NCBI Taxonomy" id="3702"/>
    <lineage>
        <taxon>Eukaryota</taxon>
        <taxon>Viridiplantae</taxon>
        <taxon>Streptophyta</taxon>
        <taxon>Embryophyta</taxon>
        <taxon>Tracheophyta</taxon>
        <taxon>Spermatophyta</taxon>
        <taxon>Magnoliopsida</taxon>
        <taxon>eudicotyledons</taxon>
        <taxon>Gunneridae</taxon>
        <taxon>Pentapetalae</taxon>
        <taxon>rosids</taxon>
        <taxon>malvids</taxon>
        <taxon>Brassicales</taxon>
        <taxon>Brassicaceae</taxon>
        <taxon>Camelineae</taxon>
        <taxon>Arabidopsis</taxon>
    </lineage>
</organism>
<evidence type="ECO:0000250" key="1"/>
<evidence type="ECO:0000255" key="2"/>
<evidence type="ECO:0000269" key="3">
    <source>
    </source>
</evidence>
<evidence type="ECO:0000305" key="4"/>
<dbReference type="EMBL" id="AB009050">
    <property type="protein sequence ID" value="BAB09238.1"/>
    <property type="molecule type" value="Genomic_DNA"/>
</dbReference>
<dbReference type="EMBL" id="CP002688">
    <property type="protein sequence ID" value="AED96671.1"/>
    <property type="molecule type" value="Genomic_DNA"/>
</dbReference>
<dbReference type="EMBL" id="BT001996">
    <property type="protein sequence ID" value="AAN72007.1"/>
    <property type="molecule type" value="mRNA"/>
</dbReference>
<dbReference type="EMBL" id="BT006255">
    <property type="protein sequence ID" value="AAP13363.1"/>
    <property type="molecule type" value="mRNA"/>
</dbReference>
<dbReference type="EMBL" id="AY087311">
    <property type="protein sequence ID" value="AAM64862.1"/>
    <property type="molecule type" value="mRNA"/>
</dbReference>
<dbReference type="RefSeq" id="NP_200382.1">
    <property type="nucleotide sequence ID" value="NM_124953.1"/>
</dbReference>
<dbReference type="SMR" id="Q9FM67"/>
<dbReference type="FunCoup" id="Q9FM67">
    <property type="interactions" value="1036"/>
</dbReference>
<dbReference type="STRING" id="3702.Q9FM67"/>
<dbReference type="PaxDb" id="3702-AT5G55710.1"/>
<dbReference type="ProteomicsDB" id="234373"/>
<dbReference type="EnsemblPlants" id="AT5G55710.1">
    <property type="protein sequence ID" value="AT5G55710.1"/>
    <property type="gene ID" value="AT5G55710"/>
</dbReference>
<dbReference type="GeneID" id="835665"/>
<dbReference type="Gramene" id="AT5G55710.1">
    <property type="protein sequence ID" value="AT5G55710.1"/>
    <property type="gene ID" value="AT5G55710"/>
</dbReference>
<dbReference type="KEGG" id="ath:AT5G55710"/>
<dbReference type="Araport" id="AT5G55710"/>
<dbReference type="TAIR" id="AT5G55710">
    <property type="gene designation" value="TIC20-V"/>
</dbReference>
<dbReference type="eggNOG" id="ENOG502QUSD">
    <property type="taxonomic scope" value="Eukaryota"/>
</dbReference>
<dbReference type="HOGENOM" id="CLU_094758_0_0_1"/>
<dbReference type="InParanoid" id="Q9FM67"/>
<dbReference type="OMA" id="IFACLPY"/>
<dbReference type="PhylomeDB" id="Q9FM67"/>
<dbReference type="PRO" id="PR:Q9FM67"/>
<dbReference type="Proteomes" id="UP000006548">
    <property type="component" value="Chromosome 5"/>
</dbReference>
<dbReference type="ExpressionAtlas" id="Q9FM67">
    <property type="expression patterns" value="baseline and differential"/>
</dbReference>
<dbReference type="GO" id="GO:0009507">
    <property type="term" value="C:chloroplast"/>
    <property type="evidence" value="ECO:0007005"/>
    <property type="project" value="TAIR"/>
</dbReference>
<dbReference type="GO" id="GO:0009706">
    <property type="term" value="C:chloroplast inner membrane"/>
    <property type="evidence" value="ECO:0007669"/>
    <property type="project" value="UniProtKB-SubCell"/>
</dbReference>
<dbReference type="GO" id="GO:0009535">
    <property type="term" value="C:chloroplast thylakoid membrane"/>
    <property type="evidence" value="ECO:0007005"/>
    <property type="project" value="TAIR"/>
</dbReference>
<dbReference type="GO" id="GO:0009579">
    <property type="term" value="C:thylakoid"/>
    <property type="evidence" value="ECO:0000314"/>
    <property type="project" value="TAIR"/>
</dbReference>
<dbReference type="GO" id="GO:0015031">
    <property type="term" value="P:protein transport"/>
    <property type="evidence" value="ECO:0007669"/>
    <property type="project" value="UniProtKB-KW"/>
</dbReference>
<dbReference type="InterPro" id="IPR005691">
    <property type="entry name" value="Tic20"/>
</dbReference>
<dbReference type="PANTHER" id="PTHR33510">
    <property type="entry name" value="PROTEIN TIC 20-II, CHLOROPLASTIC"/>
    <property type="match status" value="1"/>
</dbReference>
<dbReference type="PANTHER" id="PTHR33510:SF11">
    <property type="entry name" value="PROTEIN TIC 20-V, CHLOROPLASTIC"/>
    <property type="match status" value="1"/>
</dbReference>
<dbReference type="Pfam" id="PF16166">
    <property type="entry name" value="TIC20"/>
    <property type="match status" value="1"/>
</dbReference>
<protein>
    <recommendedName>
        <fullName>Protein TIC 20-v, chloroplastic</fullName>
    </recommendedName>
    <alternativeName>
        <fullName>Translocon at the inner envelope membrane of chloroplasts 20-V</fullName>
        <shortName>AtTIC20-v</shortName>
    </alternativeName>
</protein>
<keyword id="KW-0150">Chloroplast</keyword>
<keyword id="KW-0472">Membrane</keyword>
<keyword id="KW-0934">Plastid</keyword>
<keyword id="KW-1001">Plastid inner membrane</keyword>
<keyword id="KW-0653">Protein transport</keyword>
<keyword id="KW-1185">Reference proteome</keyword>
<keyword id="KW-0809">Transit peptide</keyword>
<keyword id="KW-0812">Transmembrane</keyword>
<keyword id="KW-1133">Transmembrane helix</keyword>
<keyword id="KW-0813">Transport</keyword>
<proteinExistence type="evidence at transcript level"/>
<accession>Q9FM67</accession>
<accession>Q8LBB6</accession>
<gene>
    <name type="primary">TIC20-V</name>
    <name type="ordered locus">At5g55710</name>
    <name type="ORF">MDF20.15</name>
</gene>
<reference key="1">
    <citation type="journal article" date="1998" name="DNA Res.">
        <title>Structural analysis of Arabidopsis thaliana chromosome 5. IV. Sequence features of the regions of 1,456,315 bp covered by nineteen physically assigned P1 and TAC clones.</title>
        <authorList>
            <person name="Sato S."/>
            <person name="Kaneko T."/>
            <person name="Kotani H."/>
            <person name="Nakamura Y."/>
            <person name="Asamizu E."/>
            <person name="Miyajima N."/>
            <person name="Tabata S."/>
        </authorList>
    </citation>
    <scope>NUCLEOTIDE SEQUENCE [LARGE SCALE GENOMIC DNA]</scope>
    <source>
        <strain>cv. Columbia</strain>
    </source>
</reference>
<reference key="2">
    <citation type="journal article" date="2017" name="Plant J.">
        <title>Araport11: a complete reannotation of the Arabidopsis thaliana reference genome.</title>
        <authorList>
            <person name="Cheng C.Y."/>
            <person name="Krishnakumar V."/>
            <person name="Chan A.P."/>
            <person name="Thibaud-Nissen F."/>
            <person name="Schobel S."/>
            <person name="Town C.D."/>
        </authorList>
    </citation>
    <scope>GENOME REANNOTATION</scope>
    <source>
        <strain>cv. Columbia</strain>
    </source>
</reference>
<reference key="3">
    <citation type="journal article" date="2003" name="Science">
        <title>Empirical analysis of transcriptional activity in the Arabidopsis genome.</title>
        <authorList>
            <person name="Yamada K."/>
            <person name="Lim J."/>
            <person name="Dale J.M."/>
            <person name="Chen H."/>
            <person name="Shinn P."/>
            <person name="Palm C.J."/>
            <person name="Southwick A.M."/>
            <person name="Wu H.C."/>
            <person name="Kim C.J."/>
            <person name="Nguyen M."/>
            <person name="Pham P.K."/>
            <person name="Cheuk R.F."/>
            <person name="Karlin-Newmann G."/>
            <person name="Liu S.X."/>
            <person name="Lam B."/>
            <person name="Sakano H."/>
            <person name="Wu T."/>
            <person name="Yu G."/>
            <person name="Miranda M."/>
            <person name="Quach H.L."/>
            <person name="Tripp M."/>
            <person name="Chang C.H."/>
            <person name="Lee J.M."/>
            <person name="Toriumi M.J."/>
            <person name="Chan M.M."/>
            <person name="Tang C.C."/>
            <person name="Onodera C.S."/>
            <person name="Deng J.M."/>
            <person name="Akiyama K."/>
            <person name="Ansari Y."/>
            <person name="Arakawa T."/>
            <person name="Banh J."/>
            <person name="Banno F."/>
            <person name="Bowser L."/>
            <person name="Brooks S.Y."/>
            <person name="Carninci P."/>
            <person name="Chao Q."/>
            <person name="Choy N."/>
            <person name="Enju A."/>
            <person name="Goldsmith A.D."/>
            <person name="Gurjal M."/>
            <person name="Hansen N.F."/>
            <person name="Hayashizaki Y."/>
            <person name="Johnson-Hopson C."/>
            <person name="Hsuan V.W."/>
            <person name="Iida K."/>
            <person name="Karnes M."/>
            <person name="Khan S."/>
            <person name="Koesema E."/>
            <person name="Ishida J."/>
            <person name="Jiang P.X."/>
            <person name="Jones T."/>
            <person name="Kawai J."/>
            <person name="Kamiya A."/>
            <person name="Meyers C."/>
            <person name="Nakajima M."/>
            <person name="Narusaka M."/>
            <person name="Seki M."/>
            <person name="Sakurai T."/>
            <person name="Satou M."/>
            <person name="Tamse R."/>
            <person name="Vaysberg M."/>
            <person name="Wallender E.K."/>
            <person name="Wong C."/>
            <person name="Yamamura Y."/>
            <person name="Yuan S."/>
            <person name="Shinozaki K."/>
            <person name="Davis R.W."/>
            <person name="Theologis A."/>
            <person name="Ecker J.R."/>
        </authorList>
    </citation>
    <scope>NUCLEOTIDE SEQUENCE [LARGE SCALE MRNA]</scope>
    <source>
        <strain>cv. Columbia</strain>
    </source>
</reference>
<reference key="4">
    <citation type="submission" date="2002-03" db="EMBL/GenBank/DDBJ databases">
        <title>Full-length cDNA from Arabidopsis thaliana.</title>
        <authorList>
            <person name="Brover V.V."/>
            <person name="Troukhan M.E."/>
            <person name="Alexandrov N.A."/>
            <person name="Lu Y.-P."/>
            <person name="Flavell R.B."/>
            <person name="Feldmann K.A."/>
        </authorList>
    </citation>
    <scope>NUCLEOTIDE SEQUENCE [LARGE SCALE MRNA]</scope>
</reference>
<reference key="5">
    <citation type="journal article" date="2011" name="Plant J.">
        <title>Molecular and genetic analyses of Tic20 homologues in Arabidopsis thaliana chloroplasts.</title>
        <authorList>
            <person name="Kasmati A.R."/>
            <person name="Toepel M."/>
            <person name="Patel R."/>
            <person name="Murtaza G."/>
            <person name="Jarvis P."/>
        </authorList>
    </citation>
    <scope>SUBCELLULAR LOCATION</scope>
    <scope>TISSUE SPECIFICITY</scope>
    <scope>DEVELOPMENTAL STAGE</scope>
    <scope>DISRUPTION PHENOTYPE</scope>
</reference>
<reference key="6">
    <citation type="journal article" date="2010" name="Biochim. Biophys. Acta">
        <title>Protein import into chloroplasts: the Tic complex and its regulation.</title>
        <authorList>
            <person name="Kovacs-Bogdan E."/>
            <person name="Soll J."/>
            <person name="Bolter B."/>
        </authorList>
    </citation>
    <scope>REVIEW</scope>
</reference>
<sequence length="209" mass="23652">MAIISQFFAPLPSLTGTLTLTGRSFLPLNLDTQFPKPRLSRDRAATLVLQSKGDDSVDASDRIISAVCYFYPFFDGIQYGKFIITQYQPFQILIQPLFPAIRAFKSFPFNGFLIFITLYFVVVRNPNFSRYVRFNTMQAIVLDVLLIFPDLLERSFNPRDGFGLDVVMSLDSTVFLFLLVSLIYGFSACLFGLTPRLPLVAEAADRQVL</sequence>